<feature type="chain" id="PRO_1000193331" description="Protein RecA">
    <location>
        <begin position="1"/>
        <end position="388"/>
    </location>
</feature>
<feature type="region of interest" description="Disordered" evidence="2">
    <location>
        <begin position="347"/>
        <end position="388"/>
    </location>
</feature>
<feature type="compositionally biased region" description="Basic and acidic residues" evidence="2">
    <location>
        <begin position="357"/>
        <end position="369"/>
    </location>
</feature>
<feature type="compositionally biased region" description="Acidic residues" evidence="2">
    <location>
        <begin position="370"/>
        <end position="388"/>
    </location>
</feature>
<feature type="binding site" evidence="1">
    <location>
        <begin position="79"/>
        <end position="86"/>
    </location>
    <ligand>
        <name>ATP</name>
        <dbReference type="ChEBI" id="CHEBI:30616"/>
    </ligand>
</feature>
<protein>
    <recommendedName>
        <fullName evidence="1">Protein RecA</fullName>
    </recommendedName>
    <alternativeName>
        <fullName evidence="1">Recombinase A</fullName>
    </alternativeName>
</protein>
<gene>
    <name evidence="1" type="primary">recA</name>
    <name type="ordered locus">SPN23F19620</name>
</gene>
<keyword id="KW-0067">ATP-binding</keyword>
<keyword id="KW-0963">Cytoplasm</keyword>
<keyword id="KW-0227">DNA damage</keyword>
<keyword id="KW-0233">DNA recombination</keyword>
<keyword id="KW-0234">DNA repair</keyword>
<keyword id="KW-0238">DNA-binding</keyword>
<keyword id="KW-0547">Nucleotide-binding</keyword>
<keyword id="KW-0742">SOS response</keyword>
<name>RECA_STRPJ</name>
<organism>
    <name type="scientific">Streptococcus pneumoniae (strain ATCC 700669 / Spain 23F-1)</name>
    <dbReference type="NCBI Taxonomy" id="561276"/>
    <lineage>
        <taxon>Bacteria</taxon>
        <taxon>Bacillati</taxon>
        <taxon>Bacillota</taxon>
        <taxon>Bacilli</taxon>
        <taxon>Lactobacillales</taxon>
        <taxon>Streptococcaceae</taxon>
        <taxon>Streptococcus</taxon>
    </lineage>
</organism>
<evidence type="ECO:0000255" key="1">
    <source>
        <dbReference type="HAMAP-Rule" id="MF_00268"/>
    </source>
</evidence>
<evidence type="ECO:0000256" key="2">
    <source>
        <dbReference type="SAM" id="MobiDB-lite"/>
    </source>
</evidence>
<proteinExistence type="inferred from homology"/>
<dbReference type="EMBL" id="FM211187">
    <property type="protein sequence ID" value="CAR69713.1"/>
    <property type="molecule type" value="Genomic_DNA"/>
</dbReference>
<dbReference type="RefSeq" id="WP_001085462.1">
    <property type="nucleotide sequence ID" value="NC_011900.1"/>
</dbReference>
<dbReference type="SMR" id="B8ZNU7"/>
<dbReference type="GeneID" id="45652840"/>
<dbReference type="KEGG" id="sne:SPN23F19620"/>
<dbReference type="HOGENOM" id="CLU_040469_3_2_9"/>
<dbReference type="GO" id="GO:0005829">
    <property type="term" value="C:cytosol"/>
    <property type="evidence" value="ECO:0007669"/>
    <property type="project" value="TreeGrafter"/>
</dbReference>
<dbReference type="GO" id="GO:0005524">
    <property type="term" value="F:ATP binding"/>
    <property type="evidence" value="ECO:0007669"/>
    <property type="project" value="UniProtKB-UniRule"/>
</dbReference>
<dbReference type="GO" id="GO:0016887">
    <property type="term" value="F:ATP hydrolysis activity"/>
    <property type="evidence" value="ECO:0007669"/>
    <property type="project" value="InterPro"/>
</dbReference>
<dbReference type="GO" id="GO:0140664">
    <property type="term" value="F:ATP-dependent DNA damage sensor activity"/>
    <property type="evidence" value="ECO:0007669"/>
    <property type="project" value="InterPro"/>
</dbReference>
<dbReference type="GO" id="GO:0003684">
    <property type="term" value="F:damaged DNA binding"/>
    <property type="evidence" value="ECO:0007669"/>
    <property type="project" value="UniProtKB-UniRule"/>
</dbReference>
<dbReference type="GO" id="GO:0003697">
    <property type="term" value="F:single-stranded DNA binding"/>
    <property type="evidence" value="ECO:0007669"/>
    <property type="project" value="UniProtKB-UniRule"/>
</dbReference>
<dbReference type="GO" id="GO:0006310">
    <property type="term" value="P:DNA recombination"/>
    <property type="evidence" value="ECO:0007669"/>
    <property type="project" value="UniProtKB-UniRule"/>
</dbReference>
<dbReference type="GO" id="GO:0006281">
    <property type="term" value="P:DNA repair"/>
    <property type="evidence" value="ECO:0007669"/>
    <property type="project" value="UniProtKB-UniRule"/>
</dbReference>
<dbReference type="GO" id="GO:0009432">
    <property type="term" value="P:SOS response"/>
    <property type="evidence" value="ECO:0007669"/>
    <property type="project" value="UniProtKB-UniRule"/>
</dbReference>
<dbReference type="CDD" id="cd00983">
    <property type="entry name" value="RecA"/>
    <property type="match status" value="1"/>
</dbReference>
<dbReference type="FunFam" id="3.40.50.300:FF:000087">
    <property type="entry name" value="Recombinase RecA"/>
    <property type="match status" value="1"/>
</dbReference>
<dbReference type="Gene3D" id="3.40.50.300">
    <property type="entry name" value="P-loop containing nucleotide triphosphate hydrolases"/>
    <property type="match status" value="1"/>
</dbReference>
<dbReference type="HAMAP" id="MF_00268">
    <property type="entry name" value="RecA"/>
    <property type="match status" value="1"/>
</dbReference>
<dbReference type="InterPro" id="IPR003593">
    <property type="entry name" value="AAA+_ATPase"/>
</dbReference>
<dbReference type="InterPro" id="IPR013765">
    <property type="entry name" value="DNA_recomb/repair_RecA"/>
</dbReference>
<dbReference type="InterPro" id="IPR020584">
    <property type="entry name" value="DNA_recomb/repair_RecA_CS"/>
</dbReference>
<dbReference type="InterPro" id="IPR027417">
    <property type="entry name" value="P-loop_NTPase"/>
</dbReference>
<dbReference type="InterPro" id="IPR049261">
    <property type="entry name" value="RecA-like_C"/>
</dbReference>
<dbReference type="InterPro" id="IPR049428">
    <property type="entry name" value="RecA-like_N"/>
</dbReference>
<dbReference type="InterPro" id="IPR020588">
    <property type="entry name" value="RecA_ATP-bd"/>
</dbReference>
<dbReference type="InterPro" id="IPR023400">
    <property type="entry name" value="RecA_C_sf"/>
</dbReference>
<dbReference type="InterPro" id="IPR020587">
    <property type="entry name" value="RecA_monomer-monomer_interface"/>
</dbReference>
<dbReference type="NCBIfam" id="TIGR02012">
    <property type="entry name" value="tigrfam_recA"/>
    <property type="match status" value="1"/>
</dbReference>
<dbReference type="PANTHER" id="PTHR45900:SF1">
    <property type="entry name" value="MITOCHONDRIAL DNA REPAIR PROTEIN RECA HOMOLOG-RELATED"/>
    <property type="match status" value="1"/>
</dbReference>
<dbReference type="PANTHER" id="PTHR45900">
    <property type="entry name" value="RECA"/>
    <property type="match status" value="1"/>
</dbReference>
<dbReference type="Pfam" id="PF00154">
    <property type="entry name" value="RecA"/>
    <property type="match status" value="1"/>
</dbReference>
<dbReference type="Pfam" id="PF21096">
    <property type="entry name" value="RecA_C"/>
    <property type="match status" value="1"/>
</dbReference>
<dbReference type="PRINTS" id="PR00142">
    <property type="entry name" value="RECA"/>
</dbReference>
<dbReference type="SMART" id="SM00382">
    <property type="entry name" value="AAA"/>
    <property type="match status" value="1"/>
</dbReference>
<dbReference type="SUPFAM" id="SSF52540">
    <property type="entry name" value="P-loop containing nucleoside triphosphate hydrolases"/>
    <property type="match status" value="1"/>
</dbReference>
<dbReference type="SUPFAM" id="SSF54752">
    <property type="entry name" value="RecA protein, C-terminal domain"/>
    <property type="match status" value="1"/>
</dbReference>
<dbReference type="PROSITE" id="PS00321">
    <property type="entry name" value="RECA_1"/>
    <property type="match status" value="1"/>
</dbReference>
<dbReference type="PROSITE" id="PS50162">
    <property type="entry name" value="RECA_2"/>
    <property type="match status" value="1"/>
</dbReference>
<dbReference type="PROSITE" id="PS50163">
    <property type="entry name" value="RECA_3"/>
    <property type="match status" value="1"/>
</dbReference>
<reference key="1">
    <citation type="journal article" date="2009" name="J. Bacteriol.">
        <title>Role of conjugative elements in the evolution of the multidrug-resistant pandemic clone Streptococcus pneumoniae Spain23F ST81.</title>
        <authorList>
            <person name="Croucher N.J."/>
            <person name="Walker D."/>
            <person name="Romero P."/>
            <person name="Lennard N."/>
            <person name="Paterson G.K."/>
            <person name="Bason N.C."/>
            <person name="Mitchell A.M."/>
            <person name="Quail M.A."/>
            <person name="Andrew P.W."/>
            <person name="Parkhill J."/>
            <person name="Bentley S.D."/>
            <person name="Mitchell T.J."/>
        </authorList>
    </citation>
    <scope>NUCLEOTIDE SEQUENCE [LARGE SCALE GENOMIC DNA]</scope>
    <source>
        <strain>ATCC 700669 / Spain 23F-1</strain>
    </source>
</reference>
<sequence>MAKKPKKLEEISKKFGAEREKALNDALKLIEKDFGKGSIMRLGERAEQKVQVMSSGSLALDIALGSGGYPKGRIIEIYGPESSGKTTVALHAVAQAQKEGGIAAFIDAEHALDPAYAAALGVNIDELLLSQPDSGEQGLEIAGKLIDSGAVDLVVVDSVAALVPRAEIDGDIGDSHVGLQARMMSQAMRKLGASINKTKTIAIFINQLREKVGVMFGNPETTPGGRALKFYASVRLDVRGNTQIKGTGDQKETNVGKETKIKVVKNKVAPPFKEAVVEIMYGEGISKTGELLKIASDLDIIKKAGAWYSYKDEKIGQGSENAKKYLAEHPEIFDEIDKQVRSKFGLIDGEEVSEQDTENKKDEPKKEEAVNEEVPLDLGDELEIEIEE</sequence>
<comment type="function">
    <text evidence="1">Can catalyze the hydrolysis of ATP in the presence of single-stranded DNA, the ATP-dependent uptake of single-stranded DNA by duplex DNA, and the ATP-dependent hybridization of homologous single-stranded DNAs. It interacts with LexA causing its activation and leading to its autocatalytic cleavage.</text>
</comment>
<comment type="subcellular location">
    <subcellularLocation>
        <location evidence="1">Cytoplasm</location>
    </subcellularLocation>
</comment>
<comment type="similarity">
    <text evidence="1">Belongs to the RecA family.</text>
</comment>
<accession>B8ZNU7</accession>